<evidence type="ECO:0000250" key="1"/>
<evidence type="ECO:0000255" key="2"/>
<evidence type="ECO:0000305" key="3"/>
<evidence type="ECO:0007829" key="4">
    <source>
        <dbReference type="PDB" id="1HKD"/>
    </source>
</evidence>
<evidence type="ECO:0007829" key="5">
    <source>
        <dbReference type="PDB" id="1OFS"/>
    </source>
</evidence>
<evidence type="ECO:0007829" key="6">
    <source>
        <dbReference type="PDB" id="2LTN"/>
    </source>
</evidence>
<name>LEC_PEA</name>
<proteinExistence type="evidence at protein level"/>
<organism>
    <name type="scientific">Pisum sativum</name>
    <name type="common">Garden pea</name>
    <name type="synonym">Lathyrus oleraceus</name>
    <dbReference type="NCBI Taxonomy" id="3888"/>
    <lineage>
        <taxon>Eukaryota</taxon>
        <taxon>Viridiplantae</taxon>
        <taxon>Streptophyta</taxon>
        <taxon>Embryophyta</taxon>
        <taxon>Tracheophyta</taxon>
        <taxon>Spermatophyta</taxon>
        <taxon>Magnoliopsida</taxon>
        <taxon>eudicotyledons</taxon>
        <taxon>Gunneridae</taxon>
        <taxon>Pentapetalae</taxon>
        <taxon>rosids</taxon>
        <taxon>fabids</taxon>
        <taxon>Fabales</taxon>
        <taxon>Fabaceae</taxon>
        <taxon>Papilionoideae</taxon>
        <taxon>50 kb inversion clade</taxon>
        <taxon>NPAAA clade</taxon>
        <taxon>Hologalegina</taxon>
        <taxon>IRL clade</taxon>
        <taxon>Fabeae</taxon>
        <taxon>Pisum</taxon>
    </lineage>
</organism>
<reference key="1">
    <citation type="journal article" date="1987" name="Nucleic Acids Res.">
        <title>Sequence of the seed lectin gene from pea (Pisum sativum L.).</title>
        <authorList>
            <person name="Gatehouse J.A."/>
            <person name="Bown D."/>
            <person name="Evans I.M."/>
            <person name="Gatehouse L.N."/>
            <person name="Jobes D."/>
            <person name="Preston P."/>
            <person name="Croy R.R.D."/>
        </authorList>
    </citation>
    <scope>NUCLEOTIDE SEQUENCE [GENOMIC DNA]</scope>
    <source>
        <strain>cv. Feltham First</strain>
        <tissue>Seed</tissue>
    </source>
</reference>
<reference key="2">
    <citation type="journal article" date="1987" name="Plant Mol. Biol.">
        <title>The pea lectin gene family contains only one functional gene.</title>
        <authorList>
            <person name="Kaminski P.A."/>
            <person name="Buffard D."/>
            <person name="Strosberg A.D."/>
        </authorList>
        <dbReference type="AGRICOLA" id="IND91054566"/>
    </citation>
    <scope>NUCLEOTIDE SEQUENCE</scope>
</reference>
<reference key="3">
    <citation type="journal article" date="1983" name="J. Biol. Chem.">
        <title>The biosynthesis and primary structure of pea seed lectin.</title>
        <authorList>
            <person name="Higgins T.J.V."/>
            <person name="Chandler P.M."/>
            <person name="Zurawski G."/>
            <person name="Button S.C."/>
            <person name="Spencer D."/>
        </authorList>
    </citation>
    <scope>NUCLEOTIDE SEQUENCE [MRNA]</scope>
    <source>
        <strain>cv. P1/G086</strain>
    </source>
</reference>
<reference key="4">
    <citation type="submission" date="1992-05" db="EMBL/GenBank/DDBJ databases">
        <authorList>
            <person name="de Pater B.S."/>
            <person name="Pham K.T."/>
            <person name="Katagiri F."/>
            <person name="Chua N.H."/>
            <person name="Kijne J.W."/>
        </authorList>
    </citation>
    <scope>NUCLEOTIDE SEQUENCE</scope>
    <source>
        <strain>cv. Feltham First</strain>
    </source>
</reference>
<reference key="5">
    <citation type="journal article" date="1978" name="Biochim. Biophys. Acta">
        <title>The complete amino acid sequence of the alpha-subunit of pea lectin, Pisum sativum.</title>
        <authorList>
            <person name="Richardson C."/>
            <person name="Behnke W.D."/>
            <person name="Freisheim J.H."/>
            <person name="Blumenthal K.M."/>
        </authorList>
    </citation>
    <scope>PROTEIN SEQUENCE OF 218-271</scope>
</reference>
<reference key="6">
    <citation type="journal article" date="1986" name="J. Biol. Chem.">
        <title>The crystal structure of pea lectin at 3.0-A resolution.</title>
        <authorList>
            <person name="Einspahr H."/>
            <person name="Parks E.H."/>
            <person name="Suguna K."/>
            <person name="Subramanian E."/>
            <person name="Suddath F.L."/>
        </authorList>
    </citation>
    <scope>X-RAY CRYSTALLOGRAPHY (3.0 ANGSTROMS)</scope>
</reference>
<reference key="7">
    <citation type="journal article" date="1993" name="J. Biol. Chem.">
        <title>X-ray crystal structure of a pea lectin-trimannoside complex at 2.6-A resolution.</title>
        <authorList>
            <person name="Rini J.M."/>
            <person name="Hardman K.D."/>
            <person name="Einspahr H."/>
            <person name="Suddath F.L."/>
            <person name="Carver J.P."/>
        </authorList>
    </citation>
    <scope>X-RAY CRYSTALLOGRAPHY (2.6 ANGSTROMS)</scope>
</reference>
<reference key="8">
    <citation type="journal article" date="1998" name="Russ. J. Bioorg. Chem.">
        <title>The structure of the pea lectin-D-mannopyranose complex at a 2.1 A resolution.</title>
        <authorList>
            <person name="Ruzeinikov S.N."/>
            <person name="Mikhailova I.Y."/>
            <person name="Tsygannik I.N."/>
            <person name="Pangborn W."/>
            <person name="Duax W."/>
            <person name="Pletnev V.Z."/>
        </authorList>
    </citation>
    <scope>X-RAY CRYSTALLOGRAPHY (2.1 ANGSTROMS)</scope>
</reference>
<reference key="9">
    <citation type="journal article" date="1992" name="Plant Mol. Biol.">
        <title>Mutational analysis of pea lectin. Substitution of Asn125 for Asp in the monosaccharide-binding site eliminates mannose/glucose-binding activity.</title>
        <authorList>
            <person name="van Eijsden R.R."/>
            <person name="Hoedemaeker F.J."/>
            <person name="Diaz C.L."/>
            <person name="Lugtenberg B.J.J."/>
            <person name="de Pater B.S."/>
            <person name="Kijne J.W."/>
        </authorList>
    </citation>
    <scope>MUTAGENESIS</scope>
</reference>
<sequence length="275" mass="30270">MASLQTQMISFYAIFLSILLTTILFFKVNSTETTSFLITKFSPDQQNLIFQGDGYTTKEKLTLTKAVKNTVGRALYSSPIHIWDRETGNVANFVTSFTFVINAPNSYNVADGFTFFIAPVDTKPQTGGGYLGVFNSAEYDKTTQTVAVEFDTFYNAAWDPSNRDRHIGIDVNSIKSVNTKSWKLQNGEEANVVIAFNAATNVLTVSLTYPNSLEEENVTSYTLSDVVSLKDVVPEWVRIGFSATTGAEYAAHEVLSWSFHSELSGTSSSKQAADA</sequence>
<accession>P02867</accession>
<comment type="function">
    <text>D-mannose specific lectin.</text>
</comment>
<comment type="subunit">
    <text>Tetramer of two alpha and two beta chains.</text>
</comment>
<comment type="miscellaneous">
    <text>Binds one manganese (or another transition metal) ion and one calcium ion. The metal ions are essential for the saccharide-binding and cell-agglutinating activities.</text>
</comment>
<comment type="similarity">
    <text evidence="3">Belongs to the leguminous lectin family.</text>
</comment>
<protein>
    <recommendedName>
        <fullName>Lectin</fullName>
    </recommendedName>
    <component>
        <recommendedName>
            <fullName>Lectin beta chain</fullName>
        </recommendedName>
    </component>
    <component>
        <recommendedName>
            <fullName>Lectin alpha chain</fullName>
        </recommendedName>
    </component>
</protein>
<feature type="signal peptide">
    <location>
        <begin position="1"/>
        <end position="30"/>
    </location>
</feature>
<feature type="chain" id="PRO_0000017623" description="Lectin beta chain">
    <location>
        <begin position="31"/>
        <end position="217"/>
    </location>
</feature>
<feature type="chain" id="PRO_0000017624" description="Lectin alpha chain">
    <location>
        <begin position="218"/>
        <end position="275"/>
    </location>
</feature>
<feature type="binding site" evidence="1">
    <location>
        <position position="149"/>
    </location>
    <ligand>
        <name>Mn(2+)</name>
        <dbReference type="ChEBI" id="CHEBI:29035"/>
    </ligand>
</feature>
<feature type="binding site" evidence="1">
    <location>
        <position position="151"/>
    </location>
    <ligand>
        <name>Ca(2+)</name>
        <dbReference type="ChEBI" id="CHEBI:29108"/>
    </ligand>
</feature>
<feature type="binding site" evidence="1">
    <location>
        <position position="151"/>
    </location>
    <ligand>
        <name>Mn(2+)</name>
        <dbReference type="ChEBI" id="CHEBI:29035"/>
    </ligand>
</feature>
<feature type="binding site" evidence="1">
    <location>
        <position position="153"/>
    </location>
    <ligand>
        <name>Ca(2+)</name>
        <dbReference type="ChEBI" id="CHEBI:29108"/>
    </ligand>
</feature>
<feature type="binding site" evidence="1">
    <location>
        <position position="155"/>
    </location>
    <ligand>
        <name>Ca(2+)</name>
        <dbReference type="ChEBI" id="CHEBI:29108"/>
    </ligand>
</feature>
<feature type="binding site" evidence="1">
    <location>
        <position position="159"/>
    </location>
    <ligand>
        <name>Ca(2+)</name>
        <dbReference type="ChEBI" id="CHEBI:29108"/>
    </ligand>
</feature>
<feature type="binding site" evidence="1">
    <location>
        <position position="159"/>
    </location>
    <ligand>
        <name>Mn(2+)</name>
        <dbReference type="ChEBI" id="CHEBI:29035"/>
    </ligand>
</feature>
<feature type="binding site" evidence="1">
    <location>
        <position position="166"/>
    </location>
    <ligand>
        <name>Mn(2+)</name>
        <dbReference type="ChEBI" id="CHEBI:29035"/>
    </ligand>
</feature>
<feature type="glycosylation site" description="N-linked (GlcNAc...) asparagine" evidence="2">
    <location>
        <position position="217"/>
    </location>
</feature>
<feature type="sequence conflict" description="In Ref. 4." evidence="3" ref="4">
    <location>
        <position position="269"/>
    </location>
</feature>
<feature type="strand" evidence="6">
    <location>
        <begin position="32"/>
        <end position="40"/>
    </location>
</feature>
<feature type="strand" evidence="6">
    <location>
        <begin position="48"/>
        <end position="52"/>
    </location>
</feature>
<feature type="strand" evidence="5">
    <location>
        <begin position="55"/>
        <end position="57"/>
    </location>
</feature>
<feature type="strand" evidence="6">
    <location>
        <begin position="58"/>
        <end position="64"/>
    </location>
</feature>
<feature type="strand" evidence="6">
    <location>
        <begin position="71"/>
        <end position="78"/>
    </location>
</feature>
<feature type="turn" evidence="6">
    <location>
        <begin position="85"/>
        <end position="87"/>
    </location>
</feature>
<feature type="strand" evidence="6">
    <location>
        <begin position="92"/>
        <end position="102"/>
    </location>
</feature>
<feature type="strand" evidence="4">
    <location>
        <begin position="104"/>
        <end position="108"/>
    </location>
</feature>
<feature type="strand" evidence="6">
    <location>
        <begin position="112"/>
        <end position="119"/>
    </location>
</feature>
<feature type="helix" evidence="6">
    <location>
        <begin position="128"/>
        <end position="130"/>
    </location>
</feature>
<feature type="turn" evidence="6">
    <location>
        <begin position="131"/>
        <end position="133"/>
    </location>
</feature>
<feature type="helix" evidence="5">
    <location>
        <begin position="141"/>
        <end position="143"/>
    </location>
</feature>
<feature type="strand" evidence="6">
    <location>
        <begin position="146"/>
        <end position="151"/>
    </location>
</feature>
<feature type="turn" evidence="6">
    <location>
        <begin position="156"/>
        <end position="158"/>
    </location>
</feature>
<feature type="strand" evidence="6">
    <location>
        <begin position="166"/>
        <end position="175"/>
    </location>
</feature>
<feature type="strand" evidence="6">
    <location>
        <begin position="177"/>
        <end position="181"/>
    </location>
</feature>
<feature type="strand" evidence="6">
    <location>
        <begin position="190"/>
        <end position="197"/>
    </location>
</feature>
<feature type="turn" evidence="6">
    <location>
        <begin position="198"/>
        <end position="201"/>
    </location>
</feature>
<feature type="strand" evidence="6">
    <location>
        <begin position="202"/>
        <end position="209"/>
    </location>
</feature>
<feature type="strand" evidence="6">
    <location>
        <begin position="219"/>
        <end position="226"/>
    </location>
</feature>
<feature type="helix" evidence="6">
    <location>
        <begin position="229"/>
        <end position="232"/>
    </location>
</feature>
<feature type="strand" evidence="6">
    <location>
        <begin position="235"/>
        <end position="244"/>
    </location>
</feature>
<feature type="strand" evidence="5">
    <location>
        <begin position="246"/>
        <end position="248"/>
    </location>
</feature>
<feature type="strand" evidence="6">
    <location>
        <begin position="251"/>
        <end position="263"/>
    </location>
</feature>
<dbReference type="EMBL" id="Y00440">
    <property type="protein sequence ID" value="CAA68497.1"/>
    <property type="molecule type" value="Genomic_DNA"/>
</dbReference>
<dbReference type="EMBL" id="M18160">
    <property type="protein sequence ID" value="AAA33676.1"/>
    <property type="molecule type" value="mRNA"/>
</dbReference>
<dbReference type="EMBL" id="J01254">
    <property type="status" value="NOT_ANNOTATED_CDS"/>
    <property type="molecule type" value="mRNA"/>
</dbReference>
<dbReference type="EMBL" id="X66368">
    <property type="protein sequence ID" value="CAA47011.1"/>
    <property type="molecule type" value="Genomic_DNA"/>
</dbReference>
<dbReference type="PIR" id="A26844">
    <property type="entry name" value="LNPM"/>
</dbReference>
<dbReference type="PDB" id="1BQP">
    <property type="method" value="X-ray"/>
    <property type="resolution" value="2.10 A"/>
    <property type="chains" value="A/C=31-211, B/D=218-264"/>
</dbReference>
<dbReference type="PDB" id="1HKD">
    <property type="method" value="X-ray"/>
    <property type="resolution" value="2.09 A"/>
    <property type="chains" value="A/C=31-211, B/D=218-269"/>
</dbReference>
<dbReference type="PDB" id="1OFS">
    <property type="method" value="X-ray"/>
    <property type="resolution" value="1.80 A"/>
    <property type="chains" value="A/C=31-217, B/D=218-265"/>
</dbReference>
<dbReference type="PDB" id="1RIN">
    <property type="method" value="X-ray"/>
    <property type="resolution" value="2.60 A"/>
    <property type="chains" value="A/C=31-210, B/D=218-266"/>
</dbReference>
<dbReference type="PDB" id="2BQP">
    <property type="method" value="X-ray"/>
    <property type="resolution" value="1.90 A"/>
    <property type="chains" value="A/B=31-264"/>
</dbReference>
<dbReference type="PDB" id="2LTN">
    <property type="method" value="X-ray"/>
    <property type="resolution" value="1.70 A"/>
    <property type="chains" value="A/C=31-211, B/D=218-269"/>
</dbReference>
<dbReference type="PDB" id="5T7P">
    <property type="method" value="X-ray"/>
    <property type="resolution" value="2.16 A"/>
    <property type="chains" value="A/B=31-266"/>
</dbReference>
<dbReference type="PDBsum" id="1BQP"/>
<dbReference type="PDBsum" id="1HKD"/>
<dbReference type="PDBsum" id="1OFS"/>
<dbReference type="PDBsum" id="1RIN"/>
<dbReference type="PDBsum" id="2BQP"/>
<dbReference type="PDBsum" id="2LTN"/>
<dbReference type="PDBsum" id="5T7P"/>
<dbReference type="PCDDB" id="P02867"/>
<dbReference type="SMR" id="P02867"/>
<dbReference type="MINT" id="P02867"/>
<dbReference type="Allergome" id="8818">
    <property type="allergen name" value="Pis s Agglutinin"/>
</dbReference>
<dbReference type="UniLectin" id="P02867"/>
<dbReference type="GlyCosmos" id="P02867">
    <property type="glycosylation" value="1 site, No reported glycans"/>
</dbReference>
<dbReference type="EnsemblPlants" id="Psat7g231520.1">
    <property type="protein sequence ID" value="Psat7g231520.1.cds1"/>
    <property type="gene ID" value="Psat7g231520"/>
</dbReference>
<dbReference type="Gramene" id="Psat7g231520.1">
    <property type="protein sequence ID" value="Psat7g231520.1.cds1"/>
    <property type="gene ID" value="Psat7g231520"/>
</dbReference>
<dbReference type="OrthoDB" id="2014373at2759"/>
<dbReference type="EvolutionaryTrace" id="P02867"/>
<dbReference type="GO" id="GO:0005537">
    <property type="term" value="F:D-mannose binding"/>
    <property type="evidence" value="ECO:0007669"/>
    <property type="project" value="UniProtKB-KW"/>
</dbReference>
<dbReference type="GO" id="GO:0046872">
    <property type="term" value="F:metal ion binding"/>
    <property type="evidence" value="ECO:0007669"/>
    <property type="project" value="UniProtKB-KW"/>
</dbReference>
<dbReference type="CDD" id="cd06899">
    <property type="entry name" value="lectin_legume_LecRK_Arcelin_ConA"/>
    <property type="match status" value="1"/>
</dbReference>
<dbReference type="FunFam" id="2.60.120.200:FF:000237">
    <property type="entry name" value="Mannose/glucose-specific lectin"/>
    <property type="match status" value="1"/>
</dbReference>
<dbReference type="Gene3D" id="2.60.120.200">
    <property type="match status" value="1"/>
</dbReference>
<dbReference type="InterPro" id="IPR013320">
    <property type="entry name" value="ConA-like_dom_sf"/>
</dbReference>
<dbReference type="InterPro" id="IPR016363">
    <property type="entry name" value="L-lectin"/>
</dbReference>
<dbReference type="InterPro" id="IPR000985">
    <property type="entry name" value="Lectin_LegA_CS"/>
</dbReference>
<dbReference type="InterPro" id="IPR019825">
    <property type="entry name" value="Lectin_legB_Mn/Ca_BS"/>
</dbReference>
<dbReference type="InterPro" id="IPR001220">
    <property type="entry name" value="Legume_lectin_dom"/>
</dbReference>
<dbReference type="InterPro" id="IPR050258">
    <property type="entry name" value="Leguminous_Lectin"/>
</dbReference>
<dbReference type="PANTHER" id="PTHR32401">
    <property type="entry name" value="CONCANAVALIN A-LIKE LECTIN FAMILY PROTEIN"/>
    <property type="match status" value="1"/>
</dbReference>
<dbReference type="PANTHER" id="PTHR32401:SF45">
    <property type="entry name" value="LECTIN"/>
    <property type="match status" value="1"/>
</dbReference>
<dbReference type="Pfam" id="PF00139">
    <property type="entry name" value="Lectin_legB"/>
    <property type="match status" value="1"/>
</dbReference>
<dbReference type="PIRSF" id="PIRSF002690">
    <property type="entry name" value="L-type_lectin_plant"/>
    <property type="match status" value="1"/>
</dbReference>
<dbReference type="SUPFAM" id="SSF49899">
    <property type="entry name" value="Concanavalin A-like lectins/glucanases"/>
    <property type="match status" value="1"/>
</dbReference>
<dbReference type="PROSITE" id="PS00308">
    <property type="entry name" value="LECTIN_LEGUME_ALPHA"/>
    <property type="match status" value="1"/>
</dbReference>
<dbReference type="PROSITE" id="PS00307">
    <property type="entry name" value="LECTIN_LEGUME_BETA"/>
    <property type="match status" value="1"/>
</dbReference>
<gene>
    <name type="primary">LECA</name>
    <name type="synonym">PSL1</name>
</gene>
<keyword id="KW-0002">3D-structure</keyword>
<keyword id="KW-0106">Calcium</keyword>
<keyword id="KW-0903">Direct protein sequencing</keyword>
<keyword id="KW-0325">Glycoprotein</keyword>
<keyword id="KW-0430">Lectin</keyword>
<keyword id="KW-0464">Manganese</keyword>
<keyword id="KW-0465">Mannose-binding</keyword>
<keyword id="KW-0479">Metal-binding</keyword>
<keyword id="KW-0732">Signal</keyword>